<accession>Q2P0W9</accession>
<feature type="chain" id="PRO_0000229295" description="Ribosome maturation factor RimP">
    <location>
        <begin position="1"/>
        <end position="196"/>
    </location>
</feature>
<feature type="region of interest" description="Disordered" evidence="2">
    <location>
        <begin position="164"/>
        <end position="196"/>
    </location>
</feature>
<feature type="compositionally biased region" description="Basic residues" evidence="2">
    <location>
        <begin position="173"/>
        <end position="182"/>
    </location>
</feature>
<gene>
    <name evidence="1" type="primary">rimP</name>
    <name type="ordered locus">XOO3053</name>
</gene>
<evidence type="ECO:0000255" key="1">
    <source>
        <dbReference type="HAMAP-Rule" id="MF_01077"/>
    </source>
</evidence>
<evidence type="ECO:0000256" key="2">
    <source>
        <dbReference type="SAM" id="MobiDB-lite"/>
    </source>
</evidence>
<keyword id="KW-0963">Cytoplasm</keyword>
<keyword id="KW-0690">Ribosome biogenesis</keyword>
<protein>
    <recommendedName>
        <fullName evidence="1">Ribosome maturation factor RimP</fullName>
    </recommendedName>
</protein>
<proteinExistence type="inferred from homology"/>
<comment type="function">
    <text evidence="1">Required for maturation of 30S ribosomal subunits.</text>
</comment>
<comment type="subcellular location">
    <subcellularLocation>
        <location evidence="1">Cytoplasm</location>
    </subcellularLocation>
</comment>
<comment type="similarity">
    <text evidence="1">Belongs to the RimP family.</text>
</comment>
<name>RIMP_XANOM</name>
<reference key="1">
    <citation type="journal article" date="2005" name="Jpn. Agric. Res. Q.">
        <title>Genome sequence of Xanthomonas oryzae pv. oryzae suggests contribution of large numbers of effector genes and insertion sequences to its race diversity.</title>
        <authorList>
            <person name="Ochiai H."/>
            <person name="Inoue Y."/>
            <person name="Takeya M."/>
            <person name="Sasaki A."/>
            <person name="Kaku H."/>
        </authorList>
    </citation>
    <scope>NUCLEOTIDE SEQUENCE [LARGE SCALE GENOMIC DNA]</scope>
    <source>
        <strain>MAFF 311018</strain>
    </source>
</reference>
<dbReference type="EMBL" id="AP008229">
    <property type="protein sequence ID" value="BAE69808.1"/>
    <property type="molecule type" value="Genomic_DNA"/>
</dbReference>
<dbReference type="RefSeq" id="WP_011259738.1">
    <property type="nucleotide sequence ID" value="NC_007705.1"/>
</dbReference>
<dbReference type="SMR" id="Q2P0W9"/>
<dbReference type="KEGG" id="xom:XOO3053"/>
<dbReference type="HOGENOM" id="CLU_070525_1_1_6"/>
<dbReference type="GO" id="GO:0005829">
    <property type="term" value="C:cytosol"/>
    <property type="evidence" value="ECO:0007669"/>
    <property type="project" value="TreeGrafter"/>
</dbReference>
<dbReference type="GO" id="GO:0000028">
    <property type="term" value="P:ribosomal small subunit assembly"/>
    <property type="evidence" value="ECO:0007669"/>
    <property type="project" value="TreeGrafter"/>
</dbReference>
<dbReference type="GO" id="GO:0006412">
    <property type="term" value="P:translation"/>
    <property type="evidence" value="ECO:0007669"/>
    <property type="project" value="TreeGrafter"/>
</dbReference>
<dbReference type="CDD" id="cd01734">
    <property type="entry name" value="YlxS_C"/>
    <property type="match status" value="1"/>
</dbReference>
<dbReference type="FunFam" id="3.30.300.70:FF:000001">
    <property type="entry name" value="Ribosome maturation factor RimP"/>
    <property type="match status" value="1"/>
</dbReference>
<dbReference type="Gene3D" id="2.30.30.180">
    <property type="entry name" value="Ribosome maturation factor RimP, C-terminal domain"/>
    <property type="match status" value="1"/>
</dbReference>
<dbReference type="Gene3D" id="3.30.300.70">
    <property type="entry name" value="RimP-like superfamily, N-terminal"/>
    <property type="match status" value="1"/>
</dbReference>
<dbReference type="HAMAP" id="MF_01077">
    <property type="entry name" value="RimP"/>
    <property type="match status" value="1"/>
</dbReference>
<dbReference type="InterPro" id="IPR003728">
    <property type="entry name" value="Ribosome_maturation_RimP"/>
</dbReference>
<dbReference type="InterPro" id="IPR028998">
    <property type="entry name" value="RimP_C"/>
</dbReference>
<dbReference type="InterPro" id="IPR036847">
    <property type="entry name" value="RimP_C_sf"/>
</dbReference>
<dbReference type="InterPro" id="IPR028989">
    <property type="entry name" value="RimP_N"/>
</dbReference>
<dbReference type="InterPro" id="IPR035956">
    <property type="entry name" value="RimP_N_sf"/>
</dbReference>
<dbReference type="NCBIfam" id="NF000927">
    <property type="entry name" value="PRK00092.1-1"/>
    <property type="match status" value="1"/>
</dbReference>
<dbReference type="NCBIfam" id="NF000931">
    <property type="entry name" value="PRK00092.2-3"/>
    <property type="match status" value="1"/>
</dbReference>
<dbReference type="PANTHER" id="PTHR33867">
    <property type="entry name" value="RIBOSOME MATURATION FACTOR RIMP"/>
    <property type="match status" value="1"/>
</dbReference>
<dbReference type="PANTHER" id="PTHR33867:SF1">
    <property type="entry name" value="RIBOSOME MATURATION FACTOR RIMP"/>
    <property type="match status" value="1"/>
</dbReference>
<dbReference type="Pfam" id="PF17384">
    <property type="entry name" value="DUF150_C"/>
    <property type="match status" value="1"/>
</dbReference>
<dbReference type="Pfam" id="PF02576">
    <property type="entry name" value="RimP_N"/>
    <property type="match status" value="1"/>
</dbReference>
<dbReference type="SUPFAM" id="SSF74942">
    <property type="entry name" value="YhbC-like, C-terminal domain"/>
    <property type="match status" value="1"/>
</dbReference>
<dbReference type="SUPFAM" id="SSF75420">
    <property type="entry name" value="YhbC-like, N-terminal domain"/>
    <property type="match status" value="1"/>
</dbReference>
<sequence>MSEKATEIANLLSPTVDSLGVELLGVEYLPAPGGATLRLYIDVPLAEQPERVINVDDCERVSREVSAQLDVEDPISGHYTLEVSSPGVDRPLFTLEQFARHAGESTKIVLKLAQDGRRRFQGEILRIDAEAGAVVFAIDGKDVQIGFDNIDKARILPDWVALGLAPQKPNKPGPKKTGHEKKKPSNESAAGKPRAE</sequence>
<organism>
    <name type="scientific">Xanthomonas oryzae pv. oryzae (strain MAFF 311018)</name>
    <dbReference type="NCBI Taxonomy" id="342109"/>
    <lineage>
        <taxon>Bacteria</taxon>
        <taxon>Pseudomonadati</taxon>
        <taxon>Pseudomonadota</taxon>
        <taxon>Gammaproteobacteria</taxon>
        <taxon>Lysobacterales</taxon>
        <taxon>Lysobacteraceae</taxon>
        <taxon>Xanthomonas</taxon>
    </lineage>
</organism>